<feature type="chain" id="PRO_1000184338" description="ATP synthase subunit c">
    <location>
        <begin position="1"/>
        <end position="76"/>
    </location>
</feature>
<feature type="transmembrane region" description="Helical" evidence="1">
    <location>
        <begin position="13"/>
        <end position="33"/>
    </location>
</feature>
<feature type="transmembrane region" description="Helical" evidence="1">
    <location>
        <begin position="55"/>
        <end position="75"/>
    </location>
</feature>
<feature type="site" description="Reversibly protonated during proton transport" evidence="1">
    <location>
        <position position="62"/>
    </location>
</feature>
<name>ATPL_BIFLS</name>
<proteinExistence type="inferred from homology"/>
<keyword id="KW-0066">ATP synthesis</keyword>
<keyword id="KW-1003">Cell membrane</keyword>
<keyword id="KW-0138">CF(0)</keyword>
<keyword id="KW-0375">Hydrogen ion transport</keyword>
<keyword id="KW-0406">Ion transport</keyword>
<keyword id="KW-0446">Lipid-binding</keyword>
<keyword id="KW-0472">Membrane</keyword>
<keyword id="KW-0812">Transmembrane</keyword>
<keyword id="KW-1133">Transmembrane helix</keyword>
<keyword id="KW-0813">Transport</keyword>
<comment type="function">
    <text evidence="1">F(1)F(0) ATP synthase produces ATP from ADP in the presence of a proton or sodium gradient. F-type ATPases consist of two structural domains, F(1) containing the extramembraneous catalytic core and F(0) containing the membrane proton channel, linked together by a central stalk and a peripheral stalk. During catalysis, ATP synthesis in the catalytic domain of F(1) is coupled via a rotary mechanism of the central stalk subunits to proton translocation.</text>
</comment>
<comment type="function">
    <text evidence="1">Key component of the F(0) channel; it plays a direct role in translocation across the membrane. A homomeric c-ring of between 10-14 subunits forms the central stalk rotor element with the F(1) delta and epsilon subunits.</text>
</comment>
<comment type="subunit">
    <text evidence="1">F-type ATPases have 2 components, F(1) - the catalytic core - and F(0) - the membrane proton channel. F(1) has five subunits: alpha(3), beta(3), gamma(1), delta(1), epsilon(1). F(0) has three main subunits: a(1), b(2) and c(10-14). The alpha and beta chains form an alternating ring which encloses part of the gamma chain. F(1) is attached to F(0) by a central stalk formed by the gamma and epsilon chains, while a peripheral stalk is formed by the delta and b chains.</text>
</comment>
<comment type="subcellular location">
    <subcellularLocation>
        <location evidence="1">Cell membrane</location>
        <topology evidence="1">Multi-pass membrane protein</topology>
    </subcellularLocation>
</comment>
<comment type="similarity">
    <text evidence="1">Belongs to the ATPase C chain family.</text>
</comment>
<evidence type="ECO:0000255" key="1">
    <source>
        <dbReference type="HAMAP-Rule" id="MF_01396"/>
    </source>
</evidence>
<gene>
    <name evidence="1" type="primary">atpE</name>
    <name type="ordered locus">Blon_0304</name>
    <name type="ordered locus">BLIJ_0309</name>
</gene>
<organism>
    <name type="scientific">Bifidobacterium longum subsp. infantis (strain ATCC 15697 / DSM 20088 / JCM 1222 / NCTC 11817 / S12)</name>
    <dbReference type="NCBI Taxonomy" id="391904"/>
    <lineage>
        <taxon>Bacteria</taxon>
        <taxon>Bacillati</taxon>
        <taxon>Actinomycetota</taxon>
        <taxon>Actinomycetes</taxon>
        <taxon>Bifidobacteriales</taxon>
        <taxon>Bifidobacteriaceae</taxon>
        <taxon>Bifidobacterium</taxon>
    </lineage>
</organism>
<reference key="1">
    <citation type="journal article" date="2008" name="Proc. Natl. Acad. Sci. U.S.A.">
        <title>The genome sequence of Bifidobacterium longum subsp. infantis reveals adaptations for milk utilization within the infant microbiome.</title>
        <authorList>
            <person name="Sela D.A."/>
            <person name="Chapman J."/>
            <person name="Adeuya A."/>
            <person name="Kim J.H."/>
            <person name="Chen F."/>
            <person name="Whitehead T.R."/>
            <person name="Lapidus A."/>
            <person name="Rokhsar D.S."/>
            <person name="Lebrilla C.B."/>
            <person name="German J.B."/>
            <person name="Price N.P."/>
            <person name="Richardson P.M."/>
            <person name="Mills D.A."/>
        </authorList>
    </citation>
    <scope>NUCLEOTIDE SEQUENCE [LARGE SCALE GENOMIC DNA]</scope>
    <source>
        <strain>ATCC 15697 / DSM 20088 / JCM 1222 / NCTC 11817 / S12</strain>
    </source>
</reference>
<reference key="2">
    <citation type="journal article" date="2011" name="Nature">
        <title>Bifidobacteria can protect from enteropathogenic infection through production of acetate.</title>
        <authorList>
            <person name="Fukuda S."/>
            <person name="Toh H."/>
            <person name="Hase K."/>
            <person name="Oshima K."/>
            <person name="Nakanishi Y."/>
            <person name="Yoshimura K."/>
            <person name="Tobe T."/>
            <person name="Clarke J.M."/>
            <person name="Topping D.L."/>
            <person name="Suzuki T."/>
            <person name="Taylor T.D."/>
            <person name="Itoh K."/>
            <person name="Kikuchi J."/>
            <person name="Morita H."/>
            <person name="Hattori M."/>
            <person name="Ohno H."/>
        </authorList>
    </citation>
    <scope>NUCLEOTIDE SEQUENCE [LARGE SCALE GENOMIC DNA]</scope>
    <source>
        <strain>ATCC 15697 / DSM 20088 / JCM 1222 / NCTC 11817 / S12</strain>
    </source>
</reference>
<sequence length="76" mass="7816">MDIITLAEVAGNLSVIGYGIGTLGPGIGLGILFGKAMESTARQPEMSGKIQTIMFIGLALVEVLALIGFVAALIIR</sequence>
<protein>
    <recommendedName>
        <fullName evidence="1">ATP synthase subunit c</fullName>
    </recommendedName>
    <alternativeName>
        <fullName evidence="1">ATP synthase F(0) sector subunit c</fullName>
    </alternativeName>
    <alternativeName>
        <fullName evidence="1">F-type ATPase subunit c</fullName>
        <shortName evidence="1">F-ATPase subunit c</shortName>
    </alternativeName>
    <alternativeName>
        <fullName evidence="1">Lipid-binding protein</fullName>
    </alternativeName>
</protein>
<accession>B7GTY8</accession>
<accession>E8MP79</accession>
<dbReference type="EMBL" id="CP001095">
    <property type="protein sequence ID" value="ACJ51429.1"/>
    <property type="molecule type" value="Genomic_DNA"/>
</dbReference>
<dbReference type="EMBL" id="AP010889">
    <property type="protein sequence ID" value="BAJ67903.1"/>
    <property type="molecule type" value="Genomic_DNA"/>
</dbReference>
<dbReference type="RefSeq" id="WP_012576739.1">
    <property type="nucleotide sequence ID" value="NZ_JDTT01000024.1"/>
</dbReference>
<dbReference type="SMR" id="B7GTY8"/>
<dbReference type="KEGG" id="bln:Blon_0304"/>
<dbReference type="KEGG" id="blon:BLIJ_0309"/>
<dbReference type="PATRIC" id="fig|391904.8.peg.312"/>
<dbReference type="HOGENOM" id="CLU_148047_5_2_11"/>
<dbReference type="Proteomes" id="UP000001360">
    <property type="component" value="Chromosome"/>
</dbReference>
<dbReference type="GO" id="GO:0005886">
    <property type="term" value="C:plasma membrane"/>
    <property type="evidence" value="ECO:0007669"/>
    <property type="project" value="UniProtKB-SubCell"/>
</dbReference>
<dbReference type="GO" id="GO:0045259">
    <property type="term" value="C:proton-transporting ATP synthase complex"/>
    <property type="evidence" value="ECO:0007669"/>
    <property type="project" value="UniProtKB-KW"/>
</dbReference>
<dbReference type="GO" id="GO:0033177">
    <property type="term" value="C:proton-transporting two-sector ATPase complex, proton-transporting domain"/>
    <property type="evidence" value="ECO:0007669"/>
    <property type="project" value="InterPro"/>
</dbReference>
<dbReference type="GO" id="GO:0008289">
    <property type="term" value="F:lipid binding"/>
    <property type="evidence" value="ECO:0007669"/>
    <property type="project" value="UniProtKB-KW"/>
</dbReference>
<dbReference type="GO" id="GO:0046933">
    <property type="term" value="F:proton-transporting ATP synthase activity, rotational mechanism"/>
    <property type="evidence" value="ECO:0007669"/>
    <property type="project" value="UniProtKB-UniRule"/>
</dbReference>
<dbReference type="CDD" id="cd18121">
    <property type="entry name" value="ATP-synt_Fo_c"/>
    <property type="match status" value="1"/>
</dbReference>
<dbReference type="FunFam" id="1.20.20.10:FF:000002">
    <property type="entry name" value="ATP synthase subunit c"/>
    <property type="match status" value="1"/>
</dbReference>
<dbReference type="Gene3D" id="1.20.20.10">
    <property type="entry name" value="F1F0 ATP synthase subunit C"/>
    <property type="match status" value="1"/>
</dbReference>
<dbReference type="HAMAP" id="MF_01396">
    <property type="entry name" value="ATP_synth_c_bact"/>
    <property type="match status" value="1"/>
</dbReference>
<dbReference type="InterPro" id="IPR005953">
    <property type="entry name" value="ATP_synth_csu_bac/chlpt"/>
</dbReference>
<dbReference type="InterPro" id="IPR000454">
    <property type="entry name" value="ATP_synth_F0_csu"/>
</dbReference>
<dbReference type="InterPro" id="IPR020537">
    <property type="entry name" value="ATP_synth_F0_csu_DDCD_BS"/>
</dbReference>
<dbReference type="InterPro" id="IPR038662">
    <property type="entry name" value="ATP_synth_F0_csu_sf"/>
</dbReference>
<dbReference type="InterPro" id="IPR002379">
    <property type="entry name" value="ATPase_proteolipid_c-like_dom"/>
</dbReference>
<dbReference type="InterPro" id="IPR035921">
    <property type="entry name" value="F/V-ATP_Csub_sf"/>
</dbReference>
<dbReference type="NCBIfam" id="TIGR01260">
    <property type="entry name" value="ATP_synt_c"/>
    <property type="match status" value="1"/>
</dbReference>
<dbReference type="Pfam" id="PF00137">
    <property type="entry name" value="ATP-synt_C"/>
    <property type="match status" value="1"/>
</dbReference>
<dbReference type="PRINTS" id="PR00124">
    <property type="entry name" value="ATPASEC"/>
</dbReference>
<dbReference type="SUPFAM" id="SSF81333">
    <property type="entry name" value="F1F0 ATP synthase subunit C"/>
    <property type="match status" value="1"/>
</dbReference>
<dbReference type="PROSITE" id="PS00605">
    <property type="entry name" value="ATPASE_C"/>
    <property type="match status" value="1"/>
</dbReference>